<accession>Q4P1Q7</accession>
<accession>A0A0D1DUF8</accession>
<gene>
    <name type="primary">RAI1</name>
    <name type="ORF">UMAG_10863</name>
</gene>
<proteinExistence type="inferred from homology"/>
<evidence type="ECO:0000250" key="1">
    <source>
        <dbReference type="UniProtKB" id="O13836"/>
    </source>
</evidence>
<evidence type="ECO:0000250" key="2">
    <source>
        <dbReference type="UniProtKB" id="O70348"/>
    </source>
</evidence>
<evidence type="ECO:0000250" key="3">
    <source>
        <dbReference type="UniProtKB" id="P53063"/>
    </source>
</evidence>
<evidence type="ECO:0000250" key="4">
    <source>
        <dbReference type="UniProtKB" id="Q06349"/>
    </source>
</evidence>
<evidence type="ECO:0000250" key="5">
    <source>
        <dbReference type="UniProtKB" id="Q5AAT0"/>
    </source>
</evidence>
<evidence type="ECO:0000305" key="6"/>
<dbReference type="EC" id="3.6.1.-" evidence="5 1"/>
<dbReference type="EMBL" id="CM003159">
    <property type="protein sequence ID" value="KIS66220.1"/>
    <property type="molecule type" value="Genomic_DNA"/>
</dbReference>
<dbReference type="RefSeq" id="XP_011392302.1">
    <property type="nucleotide sequence ID" value="XM_011394000.1"/>
</dbReference>
<dbReference type="SMR" id="Q4P1Q7"/>
<dbReference type="FunCoup" id="Q4P1Q7">
    <property type="interactions" value="210"/>
</dbReference>
<dbReference type="STRING" id="237631.Q4P1Q7"/>
<dbReference type="EnsemblFungi" id="KIS66220">
    <property type="protein sequence ID" value="KIS66220"/>
    <property type="gene ID" value="UMAG_10863"/>
</dbReference>
<dbReference type="GeneID" id="23566835"/>
<dbReference type="KEGG" id="uma:UMAG_10863"/>
<dbReference type="VEuPathDB" id="FungiDB:UMAG_10863"/>
<dbReference type="eggNOG" id="KOG1982">
    <property type="taxonomic scope" value="Eukaryota"/>
</dbReference>
<dbReference type="HOGENOM" id="CLU_024877_1_2_1"/>
<dbReference type="InParanoid" id="Q4P1Q7"/>
<dbReference type="OrthoDB" id="5853397at2759"/>
<dbReference type="Proteomes" id="UP000000561">
    <property type="component" value="Chromosome 20"/>
</dbReference>
<dbReference type="GO" id="GO:0005829">
    <property type="term" value="C:cytosol"/>
    <property type="evidence" value="ECO:0000318"/>
    <property type="project" value="GO_Central"/>
</dbReference>
<dbReference type="GO" id="GO:0005634">
    <property type="term" value="C:nucleus"/>
    <property type="evidence" value="ECO:0000318"/>
    <property type="project" value="GO_Central"/>
</dbReference>
<dbReference type="GO" id="GO:0046872">
    <property type="term" value="F:metal ion binding"/>
    <property type="evidence" value="ECO:0007669"/>
    <property type="project" value="UniProtKB-KW"/>
</dbReference>
<dbReference type="GO" id="GO:0034353">
    <property type="term" value="F:mRNA 5'-diphosphatase activity"/>
    <property type="evidence" value="ECO:0000318"/>
    <property type="project" value="GO_Central"/>
</dbReference>
<dbReference type="GO" id="GO:0004518">
    <property type="term" value="F:nuclease activity"/>
    <property type="evidence" value="ECO:0007669"/>
    <property type="project" value="UniProtKB-KW"/>
</dbReference>
<dbReference type="GO" id="GO:0000166">
    <property type="term" value="F:nucleotide binding"/>
    <property type="evidence" value="ECO:0007669"/>
    <property type="project" value="UniProtKB-KW"/>
</dbReference>
<dbReference type="GO" id="GO:0003723">
    <property type="term" value="F:RNA binding"/>
    <property type="evidence" value="ECO:0007669"/>
    <property type="project" value="UniProtKB-KW"/>
</dbReference>
<dbReference type="GO" id="GO:0110152">
    <property type="term" value="F:RNA NAD+-cap (NAD+-forming) hydrolase activity"/>
    <property type="evidence" value="ECO:0007669"/>
    <property type="project" value="RHEA"/>
</dbReference>
<dbReference type="GO" id="GO:0006397">
    <property type="term" value="P:mRNA processing"/>
    <property type="evidence" value="ECO:0007669"/>
    <property type="project" value="UniProtKB-KW"/>
</dbReference>
<dbReference type="GO" id="GO:0110155">
    <property type="term" value="P:NAD-cap decapping"/>
    <property type="evidence" value="ECO:0000318"/>
    <property type="project" value="GO_Central"/>
</dbReference>
<dbReference type="GO" id="GO:0000956">
    <property type="term" value="P:nuclear-transcribed mRNA catabolic process"/>
    <property type="evidence" value="ECO:0000318"/>
    <property type="project" value="GO_Central"/>
</dbReference>
<dbReference type="InterPro" id="IPR013961">
    <property type="entry name" value="RAI1"/>
</dbReference>
<dbReference type="InterPro" id="IPR039039">
    <property type="entry name" value="RAI1-like_fam"/>
</dbReference>
<dbReference type="PANTHER" id="PTHR12395:SF9">
    <property type="entry name" value="DECAPPING AND EXORIBONUCLEASE PROTEIN"/>
    <property type="match status" value="1"/>
</dbReference>
<dbReference type="PANTHER" id="PTHR12395">
    <property type="entry name" value="DOM-3 RELATED"/>
    <property type="match status" value="1"/>
</dbReference>
<dbReference type="Pfam" id="PF08652">
    <property type="entry name" value="RAI1"/>
    <property type="match status" value="1"/>
</dbReference>
<comment type="function">
    <text evidence="1 2 4 5">Decapping enzyme for NAD-capped RNAs: specifically hydrolyzes the nicotinamide adenine dinucleotide (NAD) cap from a subset of RNAs by removing the entire NAD moiety from the 5'-end of an NAD-capped RNA (By similarity). The NAD-cap is present at the 5'-end of some RNAs and snoRNAs. In contrast to the canonical 5'-end N7 methylguanosine (m7G) cap, the NAD cap promotes mRNA decay (By similarity). Also acts as a non-canonical decapping enzyme that removes the entire cap structure of m7G capped or incompletely capped RNAs (By similarity). Has decapping activity toward incomplete 5'-end m7G cap mRNAs such as unmethylated 5'-end-capped RNA (cap0), while it has no activity toward 2'-O-ribose methylated m7G cap (cap1) (By similarity). Also possesses RNA 5'-pyrophosphohydrolase activity by hydrolyzing the 5'-end triphosphate to release pyrophosphates (By similarity). Stimulates exoribonuclease activity of Rat1, allowing it to degrade RNAs with stable secondary structure more effectively (By similarity).</text>
</comment>
<comment type="catalytic activity">
    <reaction evidence="1">
        <text>a 5'-end NAD(+)-phospho-ribonucleoside in mRNA + H2O = a 5'-end phospho-ribonucleoside in mRNA + NAD(+) + H(+)</text>
        <dbReference type="Rhea" id="RHEA:60880"/>
        <dbReference type="Rhea" id="RHEA-COMP:15692"/>
        <dbReference type="Rhea" id="RHEA-COMP:15698"/>
        <dbReference type="ChEBI" id="CHEBI:15377"/>
        <dbReference type="ChEBI" id="CHEBI:15378"/>
        <dbReference type="ChEBI" id="CHEBI:57540"/>
        <dbReference type="ChEBI" id="CHEBI:138282"/>
        <dbReference type="ChEBI" id="CHEBI:144029"/>
    </reaction>
    <physiologicalReaction direction="left-to-right" evidence="1">
        <dbReference type="Rhea" id="RHEA:60881"/>
    </physiologicalReaction>
</comment>
<comment type="catalytic activity">
    <reaction evidence="3">
        <text>a 5'-end (N(7)-methyl 5'-triphosphoguanosine)-ribonucleoside-ribonucleotide in mRNA + H2O = a (N(7)-methyl 5'-triphosphoguanosine)-nucleoside + a 5'-end phospho-ribonucleoside in mRNA + H(+)</text>
        <dbReference type="Rhea" id="RHEA:66928"/>
        <dbReference type="Rhea" id="RHEA-COMP:15692"/>
        <dbReference type="Rhea" id="RHEA-COMP:17313"/>
        <dbReference type="ChEBI" id="CHEBI:15377"/>
        <dbReference type="ChEBI" id="CHEBI:15378"/>
        <dbReference type="ChEBI" id="CHEBI:138282"/>
        <dbReference type="ChEBI" id="CHEBI:172876"/>
        <dbReference type="ChEBI" id="CHEBI:172877"/>
    </reaction>
    <physiologicalReaction direction="left-to-right" evidence="3">
        <dbReference type="Rhea" id="RHEA:66929"/>
    </physiologicalReaction>
</comment>
<comment type="catalytic activity">
    <reaction evidence="1">
        <text>a 5'-end triphospho-ribonucleoside in mRNA + H2O = a 5'-end phospho-ribonucleoside in mRNA + diphosphate + H(+)</text>
        <dbReference type="Rhea" id="RHEA:78683"/>
        <dbReference type="Rhea" id="RHEA-COMP:15692"/>
        <dbReference type="Rhea" id="RHEA-COMP:17164"/>
        <dbReference type="ChEBI" id="CHEBI:15377"/>
        <dbReference type="ChEBI" id="CHEBI:15378"/>
        <dbReference type="ChEBI" id="CHEBI:33019"/>
        <dbReference type="ChEBI" id="CHEBI:138282"/>
        <dbReference type="ChEBI" id="CHEBI:167618"/>
    </reaction>
    <physiologicalReaction direction="left-to-right" evidence="1">
        <dbReference type="Rhea" id="RHEA:78684"/>
    </physiologicalReaction>
</comment>
<comment type="cofactor">
    <cofactor evidence="5">
        <name>a divalent metal cation</name>
        <dbReference type="ChEBI" id="CHEBI:60240"/>
    </cofactor>
    <text evidence="5">Divalent metal cation.</text>
</comment>
<comment type="subunit">
    <text evidence="1">Interacts with RAT1; the interaction is direct, stabilizes RAT1 protein structure and stimulates its exoribonuclease activity (By similarity). The interaction also stimulates RAI1 pyrophosphohydrolase activity, probably by recruiting it to mRNA substrates (By similarity).</text>
</comment>
<comment type="subcellular location">
    <subcellularLocation>
        <location evidence="3">Nucleus</location>
    </subcellularLocation>
</comment>
<comment type="similarity">
    <text evidence="6">Belongs to the DXO/Dom3Z family.</text>
</comment>
<sequence length="507" mass="57549">MPDKRALSDSYEQLPLKRAATVSSNTNDISDERIIATLRHPRACVSASGSPFSASPSFQQPVPLCSFSFDEHRKQWHDDRCKRFYRGPPPYNQRHPRQHGARAVFGADLNYGLERFVRRDQDVPEHLDALVAALQHRTEAAVSDEERDQVDQERRKADVVTWRGIITKICTAYEQTAEARFSDPLELNAMMLDDTLYLEEYTCKSARAQKQNKEDDPKMLRMGYYGYSFESYCTVDTELQTREPFRPIPSKESSLPHPAGWSGDVNTNVQWCQVVKTKLGNNRLVIGGEVDAVERNPKTGREELVELKTSMQMTWAQHNPSKAALDQERFEKKLLKFFLQSYLLGIGKIVVGFRDHHGILTTHQDFETLRIPRMVRAGQPIAGRFDHTGKPVIRQQSVWEPKDGLGFGDQILSFIRQTILSRSIQATPTEQISAGAGANTPNPTAAVGQVHHPVYRVTFRSPFDQVEMRCLSEQEIYEEVQDSGGSGARVGFLPRSFYDFVQRRAGS</sequence>
<feature type="chain" id="PRO_0000249837" description="Decapping nuclease RAI1">
    <location>
        <begin position="1"/>
        <end position="507"/>
    </location>
</feature>
<feature type="binding site" evidence="2">
    <location>
        <position position="73"/>
    </location>
    <ligand>
        <name>substrate</name>
    </ligand>
</feature>
<feature type="binding site" evidence="1">
    <location>
        <position position="230"/>
    </location>
    <ligand>
        <name>a divalent metal cation</name>
        <dbReference type="ChEBI" id="CHEBI:60240"/>
    </ligand>
</feature>
<feature type="binding site" evidence="2">
    <location>
        <position position="272"/>
    </location>
    <ligand>
        <name>substrate</name>
    </ligand>
</feature>
<feature type="binding site" evidence="2">
    <location>
        <position position="289"/>
    </location>
    <ligand>
        <name>substrate</name>
    </ligand>
</feature>
<feature type="binding site" evidence="1">
    <location>
        <position position="291"/>
    </location>
    <ligand>
        <name>a divalent metal cation</name>
        <dbReference type="ChEBI" id="CHEBI:60240"/>
    </ligand>
</feature>
<feature type="binding site" evidence="1">
    <location>
        <position position="306"/>
    </location>
    <ligand>
        <name>a divalent metal cation</name>
        <dbReference type="ChEBI" id="CHEBI:60240"/>
    </ligand>
</feature>
<feature type="binding site" evidence="1">
    <location>
        <position position="307"/>
    </location>
    <ligand>
        <name>a divalent metal cation</name>
        <dbReference type="ChEBI" id="CHEBI:60240"/>
    </ligand>
</feature>
<feature type="binding site" evidence="2">
    <location>
        <position position="308"/>
    </location>
    <ligand>
        <name>substrate</name>
    </ligand>
</feature>
<feature type="binding site" evidence="2">
    <location>
        <position position="340"/>
    </location>
    <ligand>
        <name>substrate</name>
    </ligand>
</feature>
<organism>
    <name type="scientific">Mycosarcoma maydis</name>
    <name type="common">Corn smut fungus</name>
    <name type="synonym">Ustilago maydis</name>
    <dbReference type="NCBI Taxonomy" id="5270"/>
    <lineage>
        <taxon>Eukaryota</taxon>
        <taxon>Fungi</taxon>
        <taxon>Dikarya</taxon>
        <taxon>Basidiomycota</taxon>
        <taxon>Ustilaginomycotina</taxon>
        <taxon>Ustilaginomycetes</taxon>
        <taxon>Ustilaginales</taxon>
        <taxon>Ustilaginaceae</taxon>
        <taxon>Mycosarcoma</taxon>
    </lineage>
</organism>
<keyword id="KW-0378">Hydrolase</keyword>
<keyword id="KW-0479">Metal-binding</keyword>
<keyword id="KW-0507">mRNA processing</keyword>
<keyword id="KW-0540">Nuclease</keyword>
<keyword id="KW-0547">Nucleotide-binding</keyword>
<keyword id="KW-0539">Nucleus</keyword>
<keyword id="KW-1185">Reference proteome</keyword>
<keyword id="KW-0694">RNA-binding</keyword>
<protein>
    <recommendedName>
        <fullName evidence="6">Decapping nuclease RAI1</fullName>
        <ecNumber evidence="5">3.6.1.-</ecNumber>
    </recommendedName>
    <alternativeName>
        <fullName evidence="6">NAD-capped RNA hydrolase RAI1</fullName>
        <shortName evidence="6">DeNADding enzyme RAI1</shortName>
        <ecNumber evidence="1">3.6.1.-</ecNumber>
    </alternativeName>
</protein>
<reference key="1">
    <citation type="journal article" date="2006" name="Nature">
        <title>Insights from the genome of the biotrophic fungal plant pathogen Ustilago maydis.</title>
        <authorList>
            <person name="Kaemper J."/>
            <person name="Kahmann R."/>
            <person name="Boelker M."/>
            <person name="Ma L.-J."/>
            <person name="Brefort T."/>
            <person name="Saville B.J."/>
            <person name="Banuett F."/>
            <person name="Kronstad J.W."/>
            <person name="Gold S.E."/>
            <person name="Mueller O."/>
            <person name="Perlin M.H."/>
            <person name="Woesten H.A.B."/>
            <person name="de Vries R."/>
            <person name="Ruiz-Herrera J."/>
            <person name="Reynaga-Pena C.G."/>
            <person name="Snetselaar K."/>
            <person name="McCann M."/>
            <person name="Perez-Martin J."/>
            <person name="Feldbruegge M."/>
            <person name="Basse C.W."/>
            <person name="Steinberg G."/>
            <person name="Ibeas J.I."/>
            <person name="Holloman W."/>
            <person name="Guzman P."/>
            <person name="Farman M.L."/>
            <person name="Stajich J.E."/>
            <person name="Sentandreu R."/>
            <person name="Gonzalez-Prieto J.M."/>
            <person name="Kennell J.C."/>
            <person name="Molina L."/>
            <person name="Schirawski J."/>
            <person name="Mendoza-Mendoza A."/>
            <person name="Greilinger D."/>
            <person name="Muench K."/>
            <person name="Roessel N."/>
            <person name="Scherer M."/>
            <person name="Vranes M."/>
            <person name="Ladendorf O."/>
            <person name="Vincon V."/>
            <person name="Fuchs U."/>
            <person name="Sandrock B."/>
            <person name="Meng S."/>
            <person name="Ho E.C.H."/>
            <person name="Cahill M.J."/>
            <person name="Boyce K.J."/>
            <person name="Klose J."/>
            <person name="Klosterman S.J."/>
            <person name="Deelstra H.J."/>
            <person name="Ortiz-Castellanos L."/>
            <person name="Li W."/>
            <person name="Sanchez-Alonso P."/>
            <person name="Schreier P.H."/>
            <person name="Haeuser-Hahn I."/>
            <person name="Vaupel M."/>
            <person name="Koopmann E."/>
            <person name="Friedrich G."/>
            <person name="Voss H."/>
            <person name="Schlueter T."/>
            <person name="Margolis J."/>
            <person name="Platt D."/>
            <person name="Swimmer C."/>
            <person name="Gnirke A."/>
            <person name="Chen F."/>
            <person name="Vysotskaia V."/>
            <person name="Mannhaupt G."/>
            <person name="Gueldener U."/>
            <person name="Muensterkoetter M."/>
            <person name="Haase D."/>
            <person name="Oesterheld M."/>
            <person name="Mewes H.-W."/>
            <person name="Mauceli E.W."/>
            <person name="DeCaprio D."/>
            <person name="Wade C.M."/>
            <person name="Butler J."/>
            <person name="Young S.K."/>
            <person name="Jaffe D.B."/>
            <person name="Calvo S.E."/>
            <person name="Nusbaum C."/>
            <person name="Galagan J.E."/>
            <person name="Birren B.W."/>
        </authorList>
    </citation>
    <scope>NUCLEOTIDE SEQUENCE [LARGE SCALE GENOMIC DNA]</scope>
    <source>
        <strain>DSM 14603 / FGSC 9021 / UM521</strain>
    </source>
</reference>
<reference key="2">
    <citation type="submission" date="2014-09" db="EMBL/GenBank/DDBJ databases">
        <authorList>
            <person name="Gueldener U."/>
            <person name="Muensterkoetter M."/>
            <person name="Walter M.C."/>
            <person name="Mannhaupt G."/>
            <person name="Kahmann R."/>
        </authorList>
    </citation>
    <scope>GENOME REANNOTATION</scope>
    <source>
        <strain>DSM 14603 / FGSC 9021 / UM521</strain>
    </source>
</reference>
<name>DXO_MYCMD</name>